<dbReference type="EMBL" id="AF222789">
    <property type="protein sequence ID" value="AAF33689.1"/>
    <property type="molecule type" value="Genomic_DNA"/>
</dbReference>
<dbReference type="EMBL" id="AE016958">
    <property type="protein sequence ID" value="AAS02319.1"/>
    <property type="molecule type" value="Genomic_DNA"/>
</dbReference>
<dbReference type="RefSeq" id="WP_003874371.1">
    <property type="nucleotide sequence ID" value="NZ_CP106873.1"/>
</dbReference>
<dbReference type="SMR" id="Q9L7L6"/>
<dbReference type="STRING" id="262316.MAP_0002"/>
<dbReference type="KEGG" id="mpa:MAP_0002"/>
<dbReference type="eggNOG" id="COG0592">
    <property type="taxonomic scope" value="Bacteria"/>
</dbReference>
<dbReference type="HOGENOM" id="CLU_038149_1_1_11"/>
<dbReference type="Proteomes" id="UP000000580">
    <property type="component" value="Chromosome"/>
</dbReference>
<dbReference type="GO" id="GO:0005737">
    <property type="term" value="C:cytoplasm"/>
    <property type="evidence" value="ECO:0007669"/>
    <property type="project" value="UniProtKB-SubCell"/>
</dbReference>
<dbReference type="GO" id="GO:0009360">
    <property type="term" value="C:DNA polymerase III complex"/>
    <property type="evidence" value="ECO:0007669"/>
    <property type="project" value="InterPro"/>
</dbReference>
<dbReference type="GO" id="GO:0008408">
    <property type="term" value="F:3'-5' exonuclease activity"/>
    <property type="evidence" value="ECO:0007669"/>
    <property type="project" value="InterPro"/>
</dbReference>
<dbReference type="GO" id="GO:0003677">
    <property type="term" value="F:DNA binding"/>
    <property type="evidence" value="ECO:0007669"/>
    <property type="project" value="UniProtKB-KW"/>
</dbReference>
<dbReference type="GO" id="GO:0003887">
    <property type="term" value="F:DNA-directed DNA polymerase activity"/>
    <property type="evidence" value="ECO:0007669"/>
    <property type="project" value="UniProtKB-KW"/>
</dbReference>
<dbReference type="GO" id="GO:0006271">
    <property type="term" value="P:DNA strand elongation involved in DNA replication"/>
    <property type="evidence" value="ECO:0007669"/>
    <property type="project" value="TreeGrafter"/>
</dbReference>
<dbReference type="CDD" id="cd00140">
    <property type="entry name" value="beta_clamp"/>
    <property type="match status" value="1"/>
</dbReference>
<dbReference type="FunFam" id="3.10.150.10:FF:000001">
    <property type="entry name" value="Beta sliding clamp"/>
    <property type="match status" value="1"/>
</dbReference>
<dbReference type="FunFam" id="3.10.150.10:FF:000005">
    <property type="entry name" value="Beta sliding clamp"/>
    <property type="match status" value="1"/>
</dbReference>
<dbReference type="Gene3D" id="3.10.150.10">
    <property type="entry name" value="DNA Polymerase III, subunit A, domain 2"/>
    <property type="match status" value="3"/>
</dbReference>
<dbReference type="InterPro" id="IPR046938">
    <property type="entry name" value="DNA_clamp_sf"/>
</dbReference>
<dbReference type="InterPro" id="IPR001001">
    <property type="entry name" value="DNA_polIII_beta"/>
</dbReference>
<dbReference type="InterPro" id="IPR022635">
    <property type="entry name" value="DNA_polIII_beta_C"/>
</dbReference>
<dbReference type="InterPro" id="IPR022637">
    <property type="entry name" value="DNA_polIII_beta_cen"/>
</dbReference>
<dbReference type="InterPro" id="IPR022634">
    <property type="entry name" value="DNA_polIII_beta_N"/>
</dbReference>
<dbReference type="NCBIfam" id="TIGR00663">
    <property type="entry name" value="dnan"/>
    <property type="match status" value="1"/>
</dbReference>
<dbReference type="PANTHER" id="PTHR30478:SF0">
    <property type="entry name" value="BETA SLIDING CLAMP"/>
    <property type="match status" value="1"/>
</dbReference>
<dbReference type="PANTHER" id="PTHR30478">
    <property type="entry name" value="DNA POLYMERASE III SUBUNIT BETA"/>
    <property type="match status" value="1"/>
</dbReference>
<dbReference type="Pfam" id="PF00712">
    <property type="entry name" value="DNA_pol3_beta"/>
    <property type="match status" value="1"/>
</dbReference>
<dbReference type="Pfam" id="PF02767">
    <property type="entry name" value="DNA_pol3_beta_2"/>
    <property type="match status" value="1"/>
</dbReference>
<dbReference type="Pfam" id="PF02768">
    <property type="entry name" value="DNA_pol3_beta_3"/>
    <property type="match status" value="1"/>
</dbReference>
<dbReference type="PIRSF" id="PIRSF000804">
    <property type="entry name" value="DNA_pol_III_b"/>
    <property type="match status" value="1"/>
</dbReference>
<dbReference type="SMART" id="SM00480">
    <property type="entry name" value="POL3Bc"/>
    <property type="match status" value="1"/>
</dbReference>
<dbReference type="SUPFAM" id="SSF55979">
    <property type="entry name" value="DNA clamp"/>
    <property type="match status" value="3"/>
</dbReference>
<feature type="chain" id="PRO_0000105449" description="Beta sliding clamp">
    <location>
        <begin position="1"/>
        <end position="399"/>
    </location>
</feature>
<sequence length="399" mass="41570">MDAATTTAGLSDLKFRLVRESFADAVSWVAKSLPSRPAVPVLSGVLLSGTDEGLTISGFDYEVSAEAQVAAEIASPGSVLVSGRLLSDIVRALPNKPIDFYVDGNRVALNCGSARFSLPTMAVEDYPTLPTLPEETGTLPADLFAEAIGQVAIAAGRDDTLPMLTGIRVEISGDTVVLAATDRFRLAVRELTWSAASPDIEAAVLVPAKTLAEAARTGIDGSDVRLSLGAGAGVGKDGLLGISGNGKRSTTRLLDAEFPKFRQLLPAEHTAVATINVAELTEAIKLVALVADRGAQVRMEFSEGSLRLSAGADDVGRAEEDLAVDFAGEPLTIAFNPTYLTDGLGSVRSERVSFGFTTPGKPALLRPASDDDSPPSGSGPFSALPTDYVYLLMPVRLPG</sequence>
<organism>
    <name type="scientific">Mycolicibacterium paratuberculosis (strain ATCC BAA-968 / K-10)</name>
    <name type="common">Mycobacterium paratuberculosis</name>
    <dbReference type="NCBI Taxonomy" id="262316"/>
    <lineage>
        <taxon>Bacteria</taxon>
        <taxon>Bacillati</taxon>
        <taxon>Actinomycetota</taxon>
        <taxon>Actinomycetes</taxon>
        <taxon>Mycobacteriales</taxon>
        <taxon>Mycobacteriaceae</taxon>
        <taxon>Mycobacterium</taxon>
        <taxon>Mycobacterium avium complex (MAC)</taxon>
    </lineage>
</organism>
<proteinExistence type="inferred from homology"/>
<keyword id="KW-0963">Cytoplasm</keyword>
<keyword id="KW-0235">DNA replication</keyword>
<keyword id="KW-0238">DNA-binding</keyword>
<keyword id="KW-0239">DNA-directed DNA polymerase</keyword>
<keyword id="KW-0548">Nucleotidyltransferase</keyword>
<keyword id="KW-1185">Reference proteome</keyword>
<keyword id="KW-0808">Transferase</keyword>
<evidence type="ECO:0000250" key="1">
    <source>
        <dbReference type="UniProtKB" id="P0A988"/>
    </source>
</evidence>
<evidence type="ECO:0000305" key="2"/>
<accession>Q9L7L6</accession>
<name>DPO3B_MYCPA</name>
<protein>
    <recommendedName>
        <fullName>Beta sliding clamp</fullName>
        <shortName>Beta clamp</shortName>
        <shortName>Sliding clamp</shortName>
    </recommendedName>
    <alternativeName>
        <fullName>Beta-clamp processivity factor</fullName>
    </alternativeName>
    <alternativeName>
        <fullName>DNA polymerase III beta sliding clamp subunit</fullName>
    </alternativeName>
    <alternativeName>
        <fullName>DNA polymerase III subunit beta</fullName>
    </alternativeName>
</protein>
<gene>
    <name type="primary">dnaN</name>
    <name type="ordered locus">MAP_0002</name>
</gene>
<reference key="1">
    <citation type="journal article" date="2003" name="BMC Microbiol.">
        <title>Genomic homogeneity between Mycobacterium avium subsp. avium and Mycobacterium avium subsp. paratuberculosis belies their divergent growth rates.</title>
        <authorList>
            <person name="Bannantine J.P."/>
            <person name="Zhang Q."/>
            <person name="Li L.L."/>
            <person name="Kapur V."/>
        </authorList>
    </citation>
    <scope>NUCLEOTIDE SEQUENCE [GENOMIC DNA]</scope>
    <source>
        <strain>ATCC BAA-968 / K-10</strain>
    </source>
</reference>
<reference key="2">
    <citation type="journal article" date="2005" name="Proc. Natl. Acad. Sci. U.S.A.">
        <title>The complete genome sequence of Mycobacterium avium subspecies paratuberculosis.</title>
        <authorList>
            <person name="Li L."/>
            <person name="Bannantine J.P."/>
            <person name="Zhang Q."/>
            <person name="Amonsin A."/>
            <person name="May B.J."/>
            <person name="Alt D."/>
            <person name="Banerji N."/>
            <person name="Kanjilal S."/>
            <person name="Kapur V."/>
        </authorList>
    </citation>
    <scope>NUCLEOTIDE SEQUENCE [LARGE SCALE GENOMIC DNA]</scope>
    <source>
        <strain>ATCC BAA-968 / K-10</strain>
    </source>
</reference>
<comment type="function">
    <text evidence="1">Confers DNA tethering and processivity to DNA polymerases and other proteins. Acts as a clamp, forming a ring around DNA (a reaction catalyzed by the clamp-loading complex) which diffuses in an ATP-independent manner freely and bidirectionally along dsDNA. Initially characterized for its ability to contact the catalytic subunit of DNA polymerase III (Pol III), a complex, multichain enzyme responsible for most of the replicative synthesis in bacteria; Pol III exhibits 3'-5' exonuclease proofreading activity. The beta chain is required for initiation of replication as well as for processivity of DNA replication.</text>
</comment>
<comment type="subunit">
    <text evidence="1">Forms a ring-shaped head-to-tail homodimer around DNA which binds and tethers DNA polymerases and other proteins to the DNA. The DNA replisome complex has a single clamp-loading complex (3 tau and 1 each of delta, delta', psi and chi subunits) which binds 3 Pol III cores (1 core on the leading strand and 2 on the lagging strand) each with a beta sliding clamp dimer. Additional proteins in the replisome are other copies of gamma, psi and chi, Ssb, DNA helicase and RNA primase.</text>
</comment>
<comment type="subcellular location">
    <subcellularLocation>
        <location evidence="1">Cytoplasm</location>
    </subcellularLocation>
</comment>
<comment type="similarity">
    <text evidence="2">Belongs to the beta sliding clamp family.</text>
</comment>